<gene>
    <name type="primary">PXR1</name>
    <name type="ordered locus">CAALFM_C404520WA</name>
    <name type="ORF">CaO19.11312</name>
    <name type="ORF">CaO19.3831</name>
</gene>
<reference key="1">
    <citation type="journal article" date="2004" name="Proc. Natl. Acad. Sci. U.S.A.">
        <title>The diploid genome sequence of Candida albicans.</title>
        <authorList>
            <person name="Jones T."/>
            <person name="Federspiel N.A."/>
            <person name="Chibana H."/>
            <person name="Dungan J."/>
            <person name="Kalman S."/>
            <person name="Magee B.B."/>
            <person name="Newport G."/>
            <person name="Thorstenson Y.R."/>
            <person name="Agabian N."/>
            <person name="Magee P.T."/>
            <person name="Davis R.W."/>
            <person name="Scherer S."/>
        </authorList>
    </citation>
    <scope>NUCLEOTIDE SEQUENCE [LARGE SCALE GENOMIC DNA]</scope>
    <source>
        <strain>SC5314 / ATCC MYA-2876</strain>
    </source>
</reference>
<reference key="2">
    <citation type="journal article" date="2007" name="Genome Biol.">
        <title>Assembly of the Candida albicans genome into sixteen supercontigs aligned on the eight chromosomes.</title>
        <authorList>
            <person name="van het Hoog M."/>
            <person name="Rast T.J."/>
            <person name="Martchenko M."/>
            <person name="Grindle S."/>
            <person name="Dignard D."/>
            <person name="Hogues H."/>
            <person name="Cuomo C."/>
            <person name="Berriman M."/>
            <person name="Scherer S."/>
            <person name="Magee B.B."/>
            <person name="Whiteway M."/>
            <person name="Chibana H."/>
            <person name="Nantel A."/>
            <person name="Magee P.T."/>
        </authorList>
    </citation>
    <scope>GENOME REANNOTATION</scope>
    <source>
        <strain>SC5314 / ATCC MYA-2876</strain>
    </source>
</reference>
<reference key="3">
    <citation type="journal article" date="2013" name="Genome Biol.">
        <title>Assembly of a phased diploid Candida albicans genome facilitates allele-specific measurements and provides a simple model for repeat and indel structure.</title>
        <authorList>
            <person name="Muzzey D."/>
            <person name="Schwartz K."/>
            <person name="Weissman J.S."/>
            <person name="Sherlock G."/>
        </authorList>
    </citation>
    <scope>NUCLEOTIDE SEQUENCE [LARGE SCALE GENOMIC DNA]</scope>
    <scope>GENOME REANNOTATION</scope>
    <source>
        <strain>SC5314 / ATCC MYA-2876</strain>
    </source>
</reference>
<keyword id="KW-0539">Nucleus</keyword>
<keyword id="KW-1185">Reference proteome</keyword>
<keyword id="KW-0690">Ribosome biogenesis</keyword>
<keyword id="KW-0698">rRNA processing</keyword>
<sequence length="276" mass="31392">MGLAGTKIKQRFGNDPRNTNWSNDTSRFGHQYLAKMGWQQGSGLGLVSHALTTHVKVSIKDDNLGLGAKLHKRKANGDGGLEEEGTAGLDAFQRILGRLNGKENVVNKVLDNVRDDDIINGKWGMRFVKGETLSSTWDKESKKLISYKNIEDDGKKSRKRKADESETKEDKKTLKKHKKEKKDKKEKKEKKKKKEKKDKKDKKDKKNKKDKKDKKDKKDKKDKIRTGSDETLVSKESSATPPPIATRLSARSKWIKQKRASVMDSKALNEIFMITN</sequence>
<accession>Q5A660</accession>
<accession>A0A1D8PM36</accession>
<name>PXR1_CANAL</name>
<dbReference type="EMBL" id="CP017626">
    <property type="protein sequence ID" value="AOW29200.1"/>
    <property type="molecule type" value="Genomic_DNA"/>
</dbReference>
<dbReference type="RefSeq" id="XP_717235.1">
    <property type="nucleotide sequence ID" value="XM_712142.1"/>
</dbReference>
<dbReference type="FunCoup" id="Q5A660">
    <property type="interactions" value="236"/>
</dbReference>
<dbReference type="STRING" id="237561.Q5A660"/>
<dbReference type="EnsemblFungi" id="C4_04520W_A-T">
    <property type="protein sequence ID" value="C4_04520W_A-T-p1"/>
    <property type="gene ID" value="C4_04520W_A"/>
</dbReference>
<dbReference type="GeneID" id="3641110"/>
<dbReference type="KEGG" id="cal:CAALFM_C404520WA"/>
<dbReference type="CGD" id="CAL0000197682">
    <property type="gene designation" value="orf19.11312"/>
</dbReference>
<dbReference type="VEuPathDB" id="FungiDB:C4_04520W_A"/>
<dbReference type="eggNOG" id="KOG2809">
    <property type="taxonomic scope" value="Eukaryota"/>
</dbReference>
<dbReference type="HOGENOM" id="CLU_052839_0_0_1"/>
<dbReference type="InParanoid" id="Q5A660"/>
<dbReference type="OMA" id="PCWDQSS"/>
<dbReference type="OrthoDB" id="29523at2759"/>
<dbReference type="PRO" id="PR:Q5A660"/>
<dbReference type="Proteomes" id="UP000000559">
    <property type="component" value="Chromosome 4"/>
</dbReference>
<dbReference type="GO" id="GO:0005730">
    <property type="term" value="C:nucleolus"/>
    <property type="evidence" value="ECO:0007669"/>
    <property type="project" value="UniProtKB-SubCell"/>
</dbReference>
<dbReference type="GO" id="GO:0003676">
    <property type="term" value="F:nucleic acid binding"/>
    <property type="evidence" value="ECO:0007669"/>
    <property type="project" value="InterPro"/>
</dbReference>
<dbReference type="GO" id="GO:0006364">
    <property type="term" value="P:rRNA processing"/>
    <property type="evidence" value="ECO:0007669"/>
    <property type="project" value="UniProtKB-KW"/>
</dbReference>
<dbReference type="InterPro" id="IPR000467">
    <property type="entry name" value="G_patch_dom"/>
</dbReference>
<dbReference type="InterPro" id="IPR050656">
    <property type="entry name" value="PINX1"/>
</dbReference>
<dbReference type="PANTHER" id="PTHR23149">
    <property type="entry name" value="G PATCH DOMAIN CONTAINING PROTEIN"/>
    <property type="match status" value="1"/>
</dbReference>
<dbReference type="PANTHER" id="PTHR23149:SF31">
    <property type="entry name" value="PROTEIN PXR1"/>
    <property type="match status" value="1"/>
</dbReference>
<dbReference type="Pfam" id="PF01585">
    <property type="entry name" value="G-patch"/>
    <property type="match status" value="1"/>
</dbReference>
<dbReference type="SMART" id="SM00443">
    <property type="entry name" value="G_patch"/>
    <property type="match status" value="1"/>
</dbReference>
<dbReference type="PROSITE" id="PS50174">
    <property type="entry name" value="G_PATCH"/>
    <property type="match status" value="1"/>
</dbReference>
<protein>
    <recommendedName>
        <fullName>Protein PXR1</fullName>
    </recommendedName>
    <alternativeName>
        <fullName>PinX1-related protein 1</fullName>
    </alternativeName>
</protein>
<proteinExistence type="inferred from homology"/>
<feature type="initiator methionine" description="Removed" evidence="4">
    <location>
        <position position="1"/>
    </location>
</feature>
<feature type="chain" id="PRO_0000324884" description="Protein PXR1">
    <location>
        <begin position="2"/>
        <end position="276"/>
    </location>
</feature>
<feature type="domain" description="G-patch" evidence="2">
    <location>
        <begin position="25"/>
        <end position="71"/>
    </location>
</feature>
<feature type="region of interest" description="Disordered" evidence="3">
    <location>
        <begin position="1"/>
        <end position="23"/>
    </location>
</feature>
<feature type="region of interest" description="Disordered" evidence="3">
    <location>
        <begin position="152"/>
        <end position="261"/>
    </location>
</feature>
<feature type="compositionally biased region" description="Basic and acidic residues" evidence="3">
    <location>
        <begin position="152"/>
        <end position="172"/>
    </location>
</feature>
<feature type="compositionally biased region" description="Basic residues" evidence="3">
    <location>
        <begin position="173"/>
        <end position="218"/>
    </location>
</feature>
<feature type="compositionally biased region" description="Basic and acidic residues" evidence="3">
    <location>
        <begin position="219"/>
        <end position="228"/>
    </location>
</feature>
<feature type="compositionally biased region" description="Polar residues" evidence="3">
    <location>
        <begin position="229"/>
        <end position="239"/>
    </location>
</feature>
<evidence type="ECO:0000250" key="1"/>
<evidence type="ECO:0000255" key="2">
    <source>
        <dbReference type="PROSITE-ProRule" id="PRU00092"/>
    </source>
</evidence>
<evidence type="ECO:0000256" key="3">
    <source>
        <dbReference type="SAM" id="MobiDB-lite"/>
    </source>
</evidence>
<evidence type="ECO:0000305" key="4"/>
<comment type="function">
    <text evidence="1">Involved in rRNA-processing at A0, A1 and A2 sites and negatively regulates telomerase.</text>
</comment>
<comment type="subcellular location">
    <subcellularLocation>
        <location evidence="1">Nucleus</location>
        <location evidence="1">Nucleolus</location>
    </subcellularLocation>
</comment>
<comment type="similarity">
    <text evidence="4">Belongs to the PINX1 family.</text>
</comment>
<organism>
    <name type="scientific">Candida albicans (strain SC5314 / ATCC MYA-2876)</name>
    <name type="common">Yeast</name>
    <dbReference type="NCBI Taxonomy" id="237561"/>
    <lineage>
        <taxon>Eukaryota</taxon>
        <taxon>Fungi</taxon>
        <taxon>Dikarya</taxon>
        <taxon>Ascomycota</taxon>
        <taxon>Saccharomycotina</taxon>
        <taxon>Pichiomycetes</taxon>
        <taxon>Debaryomycetaceae</taxon>
        <taxon>Candida/Lodderomyces clade</taxon>
        <taxon>Candida</taxon>
    </lineage>
</organism>